<organism>
    <name type="scientific">Aliivibrio salmonicida (strain LFI1238)</name>
    <name type="common">Vibrio salmonicida (strain LFI1238)</name>
    <dbReference type="NCBI Taxonomy" id="316275"/>
    <lineage>
        <taxon>Bacteria</taxon>
        <taxon>Pseudomonadati</taxon>
        <taxon>Pseudomonadota</taxon>
        <taxon>Gammaproteobacteria</taxon>
        <taxon>Vibrionales</taxon>
        <taxon>Vibrionaceae</taxon>
        <taxon>Aliivibrio</taxon>
    </lineage>
</organism>
<keyword id="KW-0004">4Fe-4S</keyword>
<keyword id="KW-0028">Amino-acid biosynthesis</keyword>
<keyword id="KW-0100">Branched-chain amino acid biosynthesis</keyword>
<keyword id="KW-0408">Iron</keyword>
<keyword id="KW-0411">Iron-sulfur</keyword>
<keyword id="KW-0432">Leucine biosynthesis</keyword>
<keyword id="KW-0456">Lyase</keyword>
<keyword id="KW-0479">Metal-binding</keyword>
<gene>
    <name evidence="1" type="primary">leuC</name>
    <name type="ordered locus">VSAL_I0375</name>
</gene>
<evidence type="ECO:0000255" key="1">
    <source>
        <dbReference type="HAMAP-Rule" id="MF_01026"/>
    </source>
</evidence>
<dbReference type="EC" id="4.2.1.33" evidence="1"/>
<dbReference type="EMBL" id="FM178379">
    <property type="protein sequence ID" value="CAQ78060.1"/>
    <property type="molecule type" value="Genomic_DNA"/>
</dbReference>
<dbReference type="RefSeq" id="WP_012549202.1">
    <property type="nucleotide sequence ID" value="NC_011312.1"/>
</dbReference>
<dbReference type="SMR" id="B6ELJ8"/>
<dbReference type="KEGG" id="vsa:VSAL_I0375"/>
<dbReference type="eggNOG" id="COG0065">
    <property type="taxonomic scope" value="Bacteria"/>
</dbReference>
<dbReference type="HOGENOM" id="CLU_006714_3_4_6"/>
<dbReference type="UniPathway" id="UPA00048">
    <property type="reaction ID" value="UER00071"/>
</dbReference>
<dbReference type="Proteomes" id="UP000001730">
    <property type="component" value="Chromosome 1"/>
</dbReference>
<dbReference type="GO" id="GO:0003861">
    <property type="term" value="F:3-isopropylmalate dehydratase activity"/>
    <property type="evidence" value="ECO:0007669"/>
    <property type="project" value="UniProtKB-UniRule"/>
</dbReference>
<dbReference type="GO" id="GO:0051539">
    <property type="term" value="F:4 iron, 4 sulfur cluster binding"/>
    <property type="evidence" value="ECO:0007669"/>
    <property type="project" value="UniProtKB-KW"/>
</dbReference>
<dbReference type="GO" id="GO:0046872">
    <property type="term" value="F:metal ion binding"/>
    <property type="evidence" value="ECO:0007669"/>
    <property type="project" value="UniProtKB-KW"/>
</dbReference>
<dbReference type="GO" id="GO:0009098">
    <property type="term" value="P:L-leucine biosynthetic process"/>
    <property type="evidence" value="ECO:0007669"/>
    <property type="project" value="UniProtKB-UniRule"/>
</dbReference>
<dbReference type="CDD" id="cd01583">
    <property type="entry name" value="IPMI"/>
    <property type="match status" value="1"/>
</dbReference>
<dbReference type="FunFam" id="3.30.499.10:FF:000006">
    <property type="entry name" value="3-isopropylmalate dehydratase large subunit"/>
    <property type="match status" value="1"/>
</dbReference>
<dbReference type="FunFam" id="3.30.499.10:FF:000007">
    <property type="entry name" value="3-isopropylmalate dehydratase large subunit"/>
    <property type="match status" value="1"/>
</dbReference>
<dbReference type="Gene3D" id="3.30.499.10">
    <property type="entry name" value="Aconitase, domain 3"/>
    <property type="match status" value="2"/>
</dbReference>
<dbReference type="HAMAP" id="MF_01026">
    <property type="entry name" value="LeuC_type1"/>
    <property type="match status" value="1"/>
</dbReference>
<dbReference type="InterPro" id="IPR004430">
    <property type="entry name" value="3-IsopropMal_deHydase_lsu"/>
</dbReference>
<dbReference type="InterPro" id="IPR015931">
    <property type="entry name" value="Acnase/IPM_dHydase_lsu_aba_1/3"/>
</dbReference>
<dbReference type="InterPro" id="IPR001030">
    <property type="entry name" value="Acoase/IPM_deHydtase_lsu_aba"/>
</dbReference>
<dbReference type="InterPro" id="IPR018136">
    <property type="entry name" value="Aconitase_4Fe-4S_BS"/>
</dbReference>
<dbReference type="InterPro" id="IPR036008">
    <property type="entry name" value="Aconitase_4Fe-4S_dom"/>
</dbReference>
<dbReference type="InterPro" id="IPR050067">
    <property type="entry name" value="IPM_dehydratase_rel_enz"/>
</dbReference>
<dbReference type="InterPro" id="IPR033941">
    <property type="entry name" value="IPMI_cat"/>
</dbReference>
<dbReference type="NCBIfam" id="TIGR00170">
    <property type="entry name" value="leuC"/>
    <property type="match status" value="1"/>
</dbReference>
<dbReference type="NCBIfam" id="NF004016">
    <property type="entry name" value="PRK05478.1"/>
    <property type="match status" value="1"/>
</dbReference>
<dbReference type="NCBIfam" id="NF009116">
    <property type="entry name" value="PRK12466.1"/>
    <property type="match status" value="1"/>
</dbReference>
<dbReference type="PANTHER" id="PTHR43822:SF9">
    <property type="entry name" value="3-ISOPROPYLMALATE DEHYDRATASE"/>
    <property type="match status" value="1"/>
</dbReference>
<dbReference type="PANTHER" id="PTHR43822">
    <property type="entry name" value="HOMOACONITASE, MITOCHONDRIAL-RELATED"/>
    <property type="match status" value="1"/>
</dbReference>
<dbReference type="Pfam" id="PF00330">
    <property type="entry name" value="Aconitase"/>
    <property type="match status" value="1"/>
</dbReference>
<dbReference type="PRINTS" id="PR00415">
    <property type="entry name" value="ACONITASE"/>
</dbReference>
<dbReference type="SUPFAM" id="SSF53732">
    <property type="entry name" value="Aconitase iron-sulfur domain"/>
    <property type="match status" value="1"/>
</dbReference>
<dbReference type="PROSITE" id="PS00450">
    <property type="entry name" value="ACONITASE_1"/>
    <property type="match status" value="1"/>
</dbReference>
<dbReference type="PROSITE" id="PS01244">
    <property type="entry name" value="ACONITASE_2"/>
    <property type="match status" value="1"/>
</dbReference>
<sequence>MSNAKTLYEKVYDAHVAVAAKGETPILYIDRHLVHEVTSPQAFDGLREKGRNVRQVGKTFATMDHNVSTQTKDINASGEMARIQMETLSKNCEEFGVTLYDLNHKYQGIVHVMGPELGITLPGMTIVCGDSHTATHGAFGSLAFGIGTSEVEHVLATQTLKQARAKTMKIEVKGKVTEGITAKDIVLAIIGKTTAAGGTGYVVEFCGEAITDLTMEGRMTVCNMAIELGAKAGLIAPDATTFDYITGRKFSPQGEDLTAAIEYWSSLKTDDDAKFDAVVSLDASEIKPQVTWGTNPGQVIAIDQPIPAPESFSDPVEKVSAEKALAYMGLEAGKSLTDYNVDKVFVGSCTNSRIEDIRAAAAVAKGNKVAAHVQALIVPGSEQVKAQAEKEGLDIIFKEAGFEWRLPGCSMCLAMNNDRLGPQERCASTSNRNFEGRQGRDGRTHLVSPAMAAAAAIAGHFVDIRTITEKA</sequence>
<proteinExistence type="inferred from homology"/>
<feature type="chain" id="PRO_1000135662" description="3-isopropylmalate dehydratase large subunit">
    <location>
        <begin position="1"/>
        <end position="471"/>
    </location>
</feature>
<feature type="binding site" evidence="1">
    <location>
        <position position="349"/>
    </location>
    <ligand>
        <name>[4Fe-4S] cluster</name>
        <dbReference type="ChEBI" id="CHEBI:49883"/>
    </ligand>
</feature>
<feature type="binding site" evidence="1">
    <location>
        <position position="409"/>
    </location>
    <ligand>
        <name>[4Fe-4S] cluster</name>
        <dbReference type="ChEBI" id="CHEBI:49883"/>
    </ligand>
</feature>
<feature type="binding site" evidence="1">
    <location>
        <position position="412"/>
    </location>
    <ligand>
        <name>[4Fe-4S] cluster</name>
        <dbReference type="ChEBI" id="CHEBI:49883"/>
    </ligand>
</feature>
<name>LEUC_ALISL</name>
<reference key="1">
    <citation type="journal article" date="2008" name="BMC Genomics">
        <title>The genome sequence of the fish pathogen Aliivibrio salmonicida strain LFI1238 shows extensive evidence of gene decay.</title>
        <authorList>
            <person name="Hjerde E."/>
            <person name="Lorentzen M.S."/>
            <person name="Holden M.T."/>
            <person name="Seeger K."/>
            <person name="Paulsen S."/>
            <person name="Bason N."/>
            <person name="Churcher C."/>
            <person name="Harris D."/>
            <person name="Norbertczak H."/>
            <person name="Quail M.A."/>
            <person name="Sanders S."/>
            <person name="Thurston S."/>
            <person name="Parkhill J."/>
            <person name="Willassen N.P."/>
            <person name="Thomson N.R."/>
        </authorList>
    </citation>
    <scope>NUCLEOTIDE SEQUENCE [LARGE SCALE GENOMIC DNA]</scope>
    <source>
        <strain>LFI1238</strain>
    </source>
</reference>
<protein>
    <recommendedName>
        <fullName evidence="1">3-isopropylmalate dehydratase large subunit</fullName>
        <ecNumber evidence="1">4.2.1.33</ecNumber>
    </recommendedName>
    <alternativeName>
        <fullName evidence="1">Alpha-IPM isomerase</fullName>
        <shortName evidence="1">IPMI</shortName>
    </alternativeName>
    <alternativeName>
        <fullName evidence="1">Isopropylmalate isomerase</fullName>
    </alternativeName>
</protein>
<accession>B6ELJ8</accession>
<comment type="function">
    <text evidence="1">Catalyzes the isomerization between 2-isopropylmalate and 3-isopropylmalate, via the formation of 2-isopropylmaleate.</text>
</comment>
<comment type="catalytic activity">
    <reaction evidence="1">
        <text>(2R,3S)-3-isopropylmalate = (2S)-2-isopropylmalate</text>
        <dbReference type="Rhea" id="RHEA:32287"/>
        <dbReference type="ChEBI" id="CHEBI:1178"/>
        <dbReference type="ChEBI" id="CHEBI:35121"/>
        <dbReference type="EC" id="4.2.1.33"/>
    </reaction>
</comment>
<comment type="cofactor">
    <cofactor evidence="1">
        <name>[4Fe-4S] cluster</name>
        <dbReference type="ChEBI" id="CHEBI:49883"/>
    </cofactor>
    <text evidence="1">Binds 1 [4Fe-4S] cluster per subunit.</text>
</comment>
<comment type="pathway">
    <text evidence="1">Amino-acid biosynthesis; L-leucine biosynthesis; L-leucine from 3-methyl-2-oxobutanoate: step 2/4.</text>
</comment>
<comment type="subunit">
    <text evidence="1">Heterodimer of LeuC and LeuD.</text>
</comment>
<comment type="similarity">
    <text evidence="1">Belongs to the aconitase/IPM isomerase family. LeuC type 1 subfamily.</text>
</comment>